<protein>
    <recommendedName>
        <fullName evidence="1">Methylenetetrahydrofolate--tRNA-(uracil-5-)-methyltransferase TrmFO</fullName>
        <ecNumber evidence="1">2.1.1.74</ecNumber>
    </recommendedName>
    <alternativeName>
        <fullName evidence="1">Folate-dependent tRNA (uracil-5-)-methyltransferase</fullName>
    </alternativeName>
    <alternativeName>
        <fullName evidence="1">Folate-dependent tRNA(M-5-U54)-methyltransferase</fullName>
    </alternativeName>
</protein>
<reference key="1">
    <citation type="journal article" date="2006" name="Proc. Natl. Acad. Sci. U.S.A.">
        <title>Comparative genomics of the lactic acid bacteria.</title>
        <authorList>
            <person name="Makarova K.S."/>
            <person name="Slesarev A."/>
            <person name="Wolf Y.I."/>
            <person name="Sorokin A."/>
            <person name="Mirkin B."/>
            <person name="Koonin E.V."/>
            <person name="Pavlov A."/>
            <person name="Pavlova N."/>
            <person name="Karamychev V."/>
            <person name="Polouchine N."/>
            <person name="Shakhova V."/>
            <person name="Grigoriev I."/>
            <person name="Lou Y."/>
            <person name="Rohksar D."/>
            <person name="Lucas S."/>
            <person name="Huang K."/>
            <person name="Goodstein D.M."/>
            <person name="Hawkins T."/>
            <person name="Plengvidhya V."/>
            <person name="Welker D."/>
            <person name="Hughes J."/>
            <person name="Goh Y."/>
            <person name="Benson A."/>
            <person name="Baldwin K."/>
            <person name="Lee J.-H."/>
            <person name="Diaz-Muniz I."/>
            <person name="Dosti B."/>
            <person name="Smeianov V."/>
            <person name="Wechter W."/>
            <person name="Barabote R."/>
            <person name="Lorca G."/>
            <person name="Altermann E."/>
            <person name="Barrangou R."/>
            <person name="Ganesan B."/>
            <person name="Xie Y."/>
            <person name="Rawsthorne H."/>
            <person name="Tamir D."/>
            <person name="Parker C."/>
            <person name="Breidt F."/>
            <person name="Broadbent J.R."/>
            <person name="Hutkins R."/>
            <person name="O'Sullivan D."/>
            <person name="Steele J."/>
            <person name="Unlu G."/>
            <person name="Saier M.H. Jr."/>
            <person name="Klaenhammer T."/>
            <person name="Richardson P."/>
            <person name="Kozyavkin S."/>
            <person name="Weimer B.C."/>
            <person name="Mills D.A."/>
        </authorList>
    </citation>
    <scope>NUCLEOTIDE SEQUENCE [LARGE SCALE GENOMIC DNA]</scope>
    <source>
        <strain>SK11</strain>
    </source>
</reference>
<organism>
    <name type="scientific">Lactococcus lactis subsp. cremoris (strain SK11)</name>
    <dbReference type="NCBI Taxonomy" id="272622"/>
    <lineage>
        <taxon>Bacteria</taxon>
        <taxon>Bacillati</taxon>
        <taxon>Bacillota</taxon>
        <taxon>Bacilli</taxon>
        <taxon>Lactobacillales</taxon>
        <taxon>Streptococcaceae</taxon>
        <taxon>Lactococcus</taxon>
        <taxon>Lactococcus cremoris subsp. cremoris</taxon>
    </lineage>
</organism>
<keyword id="KW-0963">Cytoplasm</keyword>
<keyword id="KW-0274">FAD</keyword>
<keyword id="KW-0285">Flavoprotein</keyword>
<keyword id="KW-0489">Methyltransferase</keyword>
<keyword id="KW-0520">NAD</keyword>
<keyword id="KW-0521">NADP</keyword>
<keyword id="KW-0808">Transferase</keyword>
<keyword id="KW-0819">tRNA processing</keyword>
<comment type="function">
    <text evidence="1">Catalyzes the folate-dependent formation of 5-methyl-uridine at position 54 (M-5-U54) in all tRNAs.</text>
</comment>
<comment type="catalytic activity">
    <reaction evidence="1">
        <text>uridine(54) in tRNA + (6R)-5,10-methylene-5,6,7,8-tetrahydrofolate + NADH + H(+) = 5-methyluridine(54) in tRNA + (6S)-5,6,7,8-tetrahydrofolate + NAD(+)</text>
        <dbReference type="Rhea" id="RHEA:16873"/>
        <dbReference type="Rhea" id="RHEA-COMP:10167"/>
        <dbReference type="Rhea" id="RHEA-COMP:10193"/>
        <dbReference type="ChEBI" id="CHEBI:15378"/>
        <dbReference type="ChEBI" id="CHEBI:15636"/>
        <dbReference type="ChEBI" id="CHEBI:57453"/>
        <dbReference type="ChEBI" id="CHEBI:57540"/>
        <dbReference type="ChEBI" id="CHEBI:57945"/>
        <dbReference type="ChEBI" id="CHEBI:65315"/>
        <dbReference type="ChEBI" id="CHEBI:74447"/>
        <dbReference type="EC" id="2.1.1.74"/>
    </reaction>
</comment>
<comment type="catalytic activity">
    <reaction evidence="1">
        <text>uridine(54) in tRNA + (6R)-5,10-methylene-5,6,7,8-tetrahydrofolate + NADPH + H(+) = 5-methyluridine(54) in tRNA + (6S)-5,6,7,8-tetrahydrofolate + NADP(+)</text>
        <dbReference type="Rhea" id="RHEA:62372"/>
        <dbReference type="Rhea" id="RHEA-COMP:10167"/>
        <dbReference type="Rhea" id="RHEA-COMP:10193"/>
        <dbReference type="ChEBI" id="CHEBI:15378"/>
        <dbReference type="ChEBI" id="CHEBI:15636"/>
        <dbReference type="ChEBI" id="CHEBI:57453"/>
        <dbReference type="ChEBI" id="CHEBI:57783"/>
        <dbReference type="ChEBI" id="CHEBI:58349"/>
        <dbReference type="ChEBI" id="CHEBI:65315"/>
        <dbReference type="ChEBI" id="CHEBI:74447"/>
        <dbReference type="EC" id="2.1.1.74"/>
    </reaction>
</comment>
<comment type="cofactor">
    <cofactor evidence="1">
        <name>FAD</name>
        <dbReference type="ChEBI" id="CHEBI:57692"/>
    </cofactor>
</comment>
<comment type="subcellular location">
    <subcellularLocation>
        <location evidence="1">Cytoplasm</location>
    </subcellularLocation>
</comment>
<comment type="similarity">
    <text evidence="1">Belongs to the MnmG family. TrmFO subfamily.</text>
</comment>
<gene>
    <name evidence="1" type="primary">trmFO</name>
    <name type="synonym">gid</name>
    <name type="ordered locus">LACR_1303</name>
</gene>
<dbReference type="EC" id="2.1.1.74" evidence="1"/>
<dbReference type="EMBL" id="CP000425">
    <property type="protein sequence ID" value="ABJ72829.1"/>
    <property type="molecule type" value="Genomic_DNA"/>
</dbReference>
<dbReference type="RefSeq" id="WP_011676298.1">
    <property type="nucleotide sequence ID" value="NC_008527.1"/>
</dbReference>
<dbReference type="SMR" id="Q02YZ3"/>
<dbReference type="KEGG" id="llc:LACR_1303"/>
<dbReference type="HOGENOM" id="CLU_033057_1_0_9"/>
<dbReference type="Proteomes" id="UP000000240">
    <property type="component" value="Chromosome"/>
</dbReference>
<dbReference type="GO" id="GO:0005829">
    <property type="term" value="C:cytosol"/>
    <property type="evidence" value="ECO:0007669"/>
    <property type="project" value="TreeGrafter"/>
</dbReference>
<dbReference type="GO" id="GO:0050660">
    <property type="term" value="F:flavin adenine dinucleotide binding"/>
    <property type="evidence" value="ECO:0007669"/>
    <property type="project" value="UniProtKB-UniRule"/>
</dbReference>
<dbReference type="GO" id="GO:0047151">
    <property type="term" value="F:tRNA (uracil(54)-C5)-methyltransferase activity, 5,10-methylenetetrahydrofolate-dependent"/>
    <property type="evidence" value="ECO:0007669"/>
    <property type="project" value="UniProtKB-UniRule"/>
</dbReference>
<dbReference type="GO" id="GO:0030488">
    <property type="term" value="P:tRNA methylation"/>
    <property type="evidence" value="ECO:0007669"/>
    <property type="project" value="TreeGrafter"/>
</dbReference>
<dbReference type="GO" id="GO:0002098">
    <property type="term" value="P:tRNA wobble uridine modification"/>
    <property type="evidence" value="ECO:0007669"/>
    <property type="project" value="TreeGrafter"/>
</dbReference>
<dbReference type="FunFam" id="3.50.50.60:FF:000035">
    <property type="entry name" value="Methylenetetrahydrofolate--tRNA-(uracil-5-)-methyltransferase TrmFO"/>
    <property type="match status" value="1"/>
</dbReference>
<dbReference type="FunFam" id="3.50.50.60:FF:000040">
    <property type="entry name" value="Methylenetetrahydrofolate--tRNA-(uracil-5-)-methyltransferase TrmFO"/>
    <property type="match status" value="1"/>
</dbReference>
<dbReference type="Gene3D" id="3.50.50.60">
    <property type="entry name" value="FAD/NAD(P)-binding domain"/>
    <property type="match status" value="2"/>
</dbReference>
<dbReference type="HAMAP" id="MF_01037">
    <property type="entry name" value="TrmFO"/>
    <property type="match status" value="1"/>
</dbReference>
<dbReference type="InterPro" id="IPR036188">
    <property type="entry name" value="FAD/NAD-bd_sf"/>
</dbReference>
<dbReference type="InterPro" id="IPR002218">
    <property type="entry name" value="MnmG-rel"/>
</dbReference>
<dbReference type="InterPro" id="IPR020595">
    <property type="entry name" value="MnmG-rel_CS"/>
</dbReference>
<dbReference type="InterPro" id="IPR040131">
    <property type="entry name" value="MnmG_N"/>
</dbReference>
<dbReference type="InterPro" id="IPR004417">
    <property type="entry name" value="TrmFO"/>
</dbReference>
<dbReference type="NCBIfam" id="TIGR00137">
    <property type="entry name" value="gid_trmFO"/>
    <property type="match status" value="1"/>
</dbReference>
<dbReference type="NCBIfam" id="NF003739">
    <property type="entry name" value="PRK05335.1"/>
    <property type="match status" value="1"/>
</dbReference>
<dbReference type="PANTHER" id="PTHR11806">
    <property type="entry name" value="GLUCOSE INHIBITED DIVISION PROTEIN A"/>
    <property type="match status" value="1"/>
</dbReference>
<dbReference type="PANTHER" id="PTHR11806:SF2">
    <property type="entry name" value="METHYLENETETRAHYDROFOLATE--TRNA-(URACIL-5-)-METHYLTRANSFERASE TRMFO"/>
    <property type="match status" value="1"/>
</dbReference>
<dbReference type="Pfam" id="PF01134">
    <property type="entry name" value="GIDA"/>
    <property type="match status" value="1"/>
</dbReference>
<dbReference type="SUPFAM" id="SSF51905">
    <property type="entry name" value="FAD/NAD(P)-binding domain"/>
    <property type="match status" value="1"/>
</dbReference>
<dbReference type="PROSITE" id="PS01281">
    <property type="entry name" value="GIDA_2"/>
    <property type="match status" value="1"/>
</dbReference>
<sequence length="448" mass="50237">MRKTHINVIGAGLAGSEAAYQIAKRGIPVKIYEMRGLKQTPQHKTEKFAELVCSNSLRGAAITNAVGLLKEEMRRLDSVIIKAAEYTQVPAGGALAVDREGFSDFVTREVSNHPLVEVIREEITDIPQDELTIIATGPLTSDSLANKIREFNGADGFYFYDAAAPIIDANSINFDKVYKKSRYDKGEADYINCPMTKEEFQAFQEALISAEEAPLNSFEDLKVFEGCMPIEEMAKRGYKTMLFGPMKPVGLEYPYEYKGPRDGEFRTPYAVVQLRQDNASASLYNIVGFQTHLKWGEQKRVFQMIPGLENAEFVRYGVMHRNSYMDSPNLLKQTFQSRKQENLFFAGQMTGVEGYVESAASGLVAGINAAKLFNDEEVVIFPKTTAIGSLPYYITHTDSKHFQPMNVTFGIVEELDGPRIRDKKERYTKVAERSLNTLTDIISKENLA</sequence>
<accession>Q02YZ3</accession>
<evidence type="ECO:0000255" key="1">
    <source>
        <dbReference type="HAMAP-Rule" id="MF_01037"/>
    </source>
</evidence>
<proteinExistence type="inferred from homology"/>
<feature type="chain" id="PRO_1000063919" description="Methylenetetrahydrofolate--tRNA-(uracil-5-)-methyltransferase TrmFO">
    <location>
        <begin position="1"/>
        <end position="448"/>
    </location>
</feature>
<feature type="binding site" evidence="1">
    <location>
        <begin position="10"/>
        <end position="15"/>
    </location>
    <ligand>
        <name>FAD</name>
        <dbReference type="ChEBI" id="CHEBI:57692"/>
    </ligand>
</feature>
<name>TRMFO_LACLS</name>